<accession>Q74I52</accession>
<reference key="1">
    <citation type="journal article" date="2004" name="Proc. Natl. Acad. Sci. U.S.A.">
        <title>The genome sequence of the probiotic intestinal bacterium Lactobacillus johnsonii NCC 533.</title>
        <authorList>
            <person name="Pridmore R.D."/>
            <person name="Berger B."/>
            <person name="Desiere F."/>
            <person name="Vilanova D."/>
            <person name="Barretto C."/>
            <person name="Pittet A.-C."/>
            <person name="Zwahlen M.-C."/>
            <person name="Rouvet M."/>
            <person name="Altermann E."/>
            <person name="Barrangou R."/>
            <person name="Mollet B."/>
            <person name="Mercenier A."/>
            <person name="Klaenhammer T."/>
            <person name="Arigoni F."/>
            <person name="Schell M.A."/>
        </authorList>
    </citation>
    <scope>NUCLEOTIDE SEQUENCE [LARGE SCALE GENOMIC DNA]</scope>
    <source>
        <strain>CNCM I-1225 / La1 / NCC 533</strain>
    </source>
</reference>
<comment type="function">
    <text evidence="1">Allows the formation of correctly charged Gln-tRNA(Gln) through the transamidation of misacylated Glu-tRNA(Gln) in organisms which lack glutaminyl-tRNA synthetase. The reaction takes place in the presence of glutamine and ATP through an activated gamma-phospho-Glu-tRNA(Gln).</text>
</comment>
<comment type="catalytic activity">
    <reaction evidence="1">
        <text>L-glutamyl-tRNA(Gln) + L-glutamine + ATP + H2O = L-glutaminyl-tRNA(Gln) + L-glutamate + ADP + phosphate + H(+)</text>
        <dbReference type="Rhea" id="RHEA:17521"/>
        <dbReference type="Rhea" id="RHEA-COMP:9681"/>
        <dbReference type="Rhea" id="RHEA-COMP:9684"/>
        <dbReference type="ChEBI" id="CHEBI:15377"/>
        <dbReference type="ChEBI" id="CHEBI:15378"/>
        <dbReference type="ChEBI" id="CHEBI:29985"/>
        <dbReference type="ChEBI" id="CHEBI:30616"/>
        <dbReference type="ChEBI" id="CHEBI:43474"/>
        <dbReference type="ChEBI" id="CHEBI:58359"/>
        <dbReference type="ChEBI" id="CHEBI:78520"/>
        <dbReference type="ChEBI" id="CHEBI:78521"/>
        <dbReference type="ChEBI" id="CHEBI:456216"/>
        <dbReference type="EC" id="6.3.5.7"/>
    </reaction>
</comment>
<comment type="subunit">
    <text evidence="1">Heterotrimer of A, B and C subunits.</text>
</comment>
<comment type="similarity">
    <text evidence="1">Belongs to the amidase family. GatA subfamily.</text>
</comment>
<dbReference type="EC" id="6.3.5.7" evidence="1"/>
<dbReference type="EMBL" id="AE017198">
    <property type="protein sequence ID" value="AAS09488.1"/>
    <property type="molecule type" value="Genomic_DNA"/>
</dbReference>
<dbReference type="RefSeq" id="WP_011162394.1">
    <property type="nucleotide sequence ID" value="NC_005362.1"/>
</dbReference>
<dbReference type="SMR" id="Q74I52"/>
<dbReference type="KEGG" id="ljo:LJ_1717"/>
<dbReference type="PATRIC" id="fig|257314.6.peg.1540"/>
<dbReference type="eggNOG" id="COG0154">
    <property type="taxonomic scope" value="Bacteria"/>
</dbReference>
<dbReference type="HOGENOM" id="CLU_009600_0_3_9"/>
<dbReference type="Proteomes" id="UP000000581">
    <property type="component" value="Chromosome"/>
</dbReference>
<dbReference type="GO" id="GO:0030956">
    <property type="term" value="C:glutamyl-tRNA(Gln) amidotransferase complex"/>
    <property type="evidence" value="ECO:0007669"/>
    <property type="project" value="InterPro"/>
</dbReference>
<dbReference type="GO" id="GO:0005524">
    <property type="term" value="F:ATP binding"/>
    <property type="evidence" value="ECO:0007669"/>
    <property type="project" value="UniProtKB-KW"/>
</dbReference>
<dbReference type="GO" id="GO:0050567">
    <property type="term" value="F:glutaminyl-tRNA synthase (glutamine-hydrolyzing) activity"/>
    <property type="evidence" value="ECO:0007669"/>
    <property type="project" value="UniProtKB-UniRule"/>
</dbReference>
<dbReference type="GO" id="GO:0006412">
    <property type="term" value="P:translation"/>
    <property type="evidence" value="ECO:0007669"/>
    <property type="project" value="UniProtKB-UniRule"/>
</dbReference>
<dbReference type="Gene3D" id="3.90.1300.10">
    <property type="entry name" value="Amidase signature (AS) domain"/>
    <property type="match status" value="1"/>
</dbReference>
<dbReference type="HAMAP" id="MF_00120">
    <property type="entry name" value="GatA"/>
    <property type="match status" value="1"/>
</dbReference>
<dbReference type="InterPro" id="IPR000120">
    <property type="entry name" value="Amidase"/>
</dbReference>
<dbReference type="InterPro" id="IPR020556">
    <property type="entry name" value="Amidase_CS"/>
</dbReference>
<dbReference type="InterPro" id="IPR023631">
    <property type="entry name" value="Amidase_dom"/>
</dbReference>
<dbReference type="InterPro" id="IPR036928">
    <property type="entry name" value="AS_sf"/>
</dbReference>
<dbReference type="InterPro" id="IPR004412">
    <property type="entry name" value="GatA"/>
</dbReference>
<dbReference type="NCBIfam" id="TIGR00132">
    <property type="entry name" value="gatA"/>
    <property type="match status" value="1"/>
</dbReference>
<dbReference type="PANTHER" id="PTHR11895:SF151">
    <property type="entry name" value="GLUTAMYL-TRNA(GLN) AMIDOTRANSFERASE SUBUNIT A"/>
    <property type="match status" value="1"/>
</dbReference>
<dbReference type="PANTHER" id="PTHR11895">
    <property type="entry name" value="TRANSAMIDASE"/>
    <property type="match status" value="1"/>
</dbReference>
<dbReference type="Pfam" id="PF01425">
    <property type="entry name" value="Amidase"/>
    <property type="match status" value="1"/>
</dbReference>
<dbReference type="SUPFAM" id="SSF75304">
    <property type="entry name" value="Amidase signature (AS) enzymes"/>
    <property type="match status" value="1"/>
</dbReference>
<dbReference type="PROSITE" id="PS00571">
    <property type="entry name" value="AMIDASES"/>
    <property type="match status" value="1"/>
</dbReference>
<evidence type="ECO:0000255" key="1">
    <source>
        <dbReference type="HAMAP-Rule" id="MF_00120"/>
    </source>
</evidence>
<sequence>MNYLNENIDSLNKKLQDGEITAEDLAKETVKNIKETDKKINAWITVDEEAKPAENLDFNKNKLAGIPIAIKDNIITNGMKTTAASHILYNYMPVYDATVISKLKKAQATFVGKTNMDEFAMGSSTEHSYYGETHNPWNLDKVPGGSSGGSAAAVASGEVVAALGSDTGGSIRQPAAFNGIFGIKPTYGRVSRWGLIAFGSSLDQIGVMSKRVKDSAEVLNVIAGPDEHDATVSEQEVPDYTSFLGQDVKGLRVAVPKEYMDAVDGEMREVIQKQIDVLKDAGAIINEVSLPHTKYVVPTYYIVASSEASSNLQRYDGIRYGYRAKDTKNLLDVYVKSRSEGFGDEVKRRIMLGSFALSAGAYDEFFKKAAQVRTLICRDFEKIFEENDVIVGPTTTEPAFGIGEEISDPIKMYNNDLLTISANLAGIPAASVPAGLVDGMPAGLQIMAKRFDEGNVFKVADFIERNNKFYEKTPTGMED</sequence>
<gene>
    <name evidence="1" type="primary">gatA</name>
    <name type="ordered locus">LJ_1717</name>
</gene>
<feature type="chain" id="PRO_0000241111" description="Glutamyl-tRNA(Gln) amidotransferase subunit A">
    <location>
        <begin position="1"/>
        <end position="479"/>
    </location>
</feature>
<feature type="active site" description="Charge relay system" evidence="1">
    <location>
        <position position="71"/>
    </location>
</feature>
<feature type="active site" description="Charge relay system" evidence="1">
    <location>
        <position position="146"/>
    </location>
</feature>
<feature type="active site" description="Acyl-ester intermediate" evidence="1">
    <location>
        <position position="170"/>
    </location>
</feature>
<name>GATA_LACJO</name>
<organism>
    <name type="scientific">Lactobacillus johnsonii (strain CNCM I-12250 / La1 / NCC 533)</name>
    <dbReference type="NCBI Taxonomy" id="257314"/>
    <lineage>
        <taxon>Bacteria</taxon>
        <taxon>Bacillati</taxon>
        <taxon>Bacillota</taxon>
        <taxon>Bacilli</taxon>
        <taxon>Lactobacillales</taxon>
        <taxon>Lactobacillaceae</taxon>
        <taxon>Lactobacillus</taxon>
    </lineage>
</organism>
<keyword id="KW-0067">ATP-binding</keyword>
<keyword id="KW-0436">Ligase</keyword>
<keyword id="KW-0547">Nucleotide-binding</keyword>
<keyword id="KW-0648">Protein biosynthesis</keyword>
<proteinExistence type="inferred from homology"/>
<protein>
    <recommendedName>
        <fullName evidence="1">Glutamyl-tRNA(Gln) amidotransferase subunit A</fullName>
        <shortName evidence="1">Glu-ADT subunit A</shortName>
        <ecNumber evidence="1">6.3.5.7</ecNumber>
    </recommendedName>
</protein>